<organism>
    <name type="scientific">Arabidopsis thaliana</name>
    <name type="common">Mouse-ear cress</name>
    <dbReference type="NCBI Taxonomy" id="3702"/>
    <lineage>
        <taxon>Eukaryota</taxon>
        <taxon>Viridiplantae</taxon>
        <taxon>Streptophyta</taxon>
        <taxon>Embryophyta</taxon>
        <taxon>Tracheophyta</taxon>
        <taxon>Spermatophyta</taxon>
        <taxon>Magnoliopsida</taxon>
        <taxon>eudicotyledons</taxon>
        <taxon>Gunneridae</taxon>
        <taxon>Pentapetalae</taxon>
        <taxon>rosids</taxon>
        <taxon>malvids</taxon>
        <taxon>Brassicales</taxon>
        <taxon>Brassicaceae</taxon>
        <taxon>Camelineae</taxon>
        <taxon>Arabidopsis</taxon>
    </lineage>
</organism>
<keyword id="KW-0938">Abscisic acid signaling pathway</keyword>
<keyword id="KW-0025">Alternative splicing</keyword>
<keyword id="KW-0927">Auxin signaling pathway</keyword>
<keyword id="KW-0378">Hydrolase</keyword>
<keyword id="KW-0539">Nucleus</keyword>
<keyword id="KW-0904">Protein phosphatase</keyword>
<keyword id="KW-1185">Reference proteome</keyword>
<accession>Q84JU4</accession>
<accession>Q3EC68</accession>
<accession>Q9SJB6</accession>
<sequence>MRKRERENPCSICGHYHKYEEGEVCGVCGHCMPVSSDTVAPQQVHVSAFPSEILPEFLYLGSYDNASRSELLKTQGISRVLNTVPMCQNLYRNSFTYHGLDNEKVLQFDDAIKFLDQCEKDKARVLVHCMSGKSRSPAVVVAYLMKRKGWRLAESHQWVKQRRPSTDISPEFYQQLQEFEQGIFGSEMMSAMNINDAPTFGFGFPKIDNQAQAPVFNNAPTSSIFSSPASSIPPQEFTFGATPPKPTTGGDIAMDGS</sequence>
<gene>
    <name type="primary">IBR5</name>
    <name type="synonym">SKIP33</name>
    <name type="ordered locus">At2g04550</name>
    <name type="ORF">T1O3.4</name>
</gene>
<name>IBR5_ARATH</name>
<dbReference type="EC" id="3.1.3.48"/>
<dbReference type="EMBL" id="BT004283">
    <property type="protein sequence ID" value="AAO42283.1"/>
    <property type="molecule type" value="mRNA"/>
</dbReference>
<dbReference type="EMBL" id="AC006951">
    <property type="protein sequence ID" value="AAD25825.1"/>
    <property type="status" value="ALT_SEQ"/>
    <property type="molecule type" value="Genomic_DNA"/>
</dbReference>
<dbReference type="EMBL" id="CP002685">
    <property type="protein sequence ID" value="AEC05845.1"/>
    <property type="molecule type" value="Genomic_DNA"/>
</dbReference>
<dbReference type="EMBL" id="CP002685">
    <property type="protein sequence ID" value="AEC05846.1"/>
    <property type="molecule type" value="Genomic_DNA"/>
</dbReference>
<dbReference type="EMBL" id="BT005609">
    <property type="protein sequence ID" value="AAO64029.1"/>
    <property type="molecule type" value="mRNA"/>
</dbReference>
<dbReference type="EMBL" id="AY337455">
    <property type="protein sequence ID" value="AAR04550.1"/>
    <property type="molecule type" value="mRNA"/>
</dbReference>
<dbReference type="PIR" id="G84458">
    <property type="entry name" value="G84458"/>
</dbReference>
<dbReference type="RefSeq" id="NP_178534.2">
    <molecule id="Q84JU4-1"/>
    <property type="nucleotide sequence ID" value="NM_126486.6"/>
</dbReference>
<dbReference type="RefSeq" id="NP_973418.2">
    <molecule id="Q84JU4-2"/>
    <property type="nucleotide sequence ID" value="NM_201689.3"/>
</dbReference>
<dbReference type="SMR" id="Q84JU4"/>
<dbReference type="BioGRID" id="398">
    <property type="interactions" value="10"/>
</dbReference>
<dbReference type="FunCoup" id="Q84JU4">
    <property type="interactions" value="226"/>
</dbReference>
<dbReference type="IntAct" id="Q84JU4">
    <property type="interactions" value="10"/>
</dbReference>
<dbReference type="STRING" id="3702.Q84JU4"/>
<dbReference type="GlyGen" id="Q84JU4">
    <property type="glycosylation" value="1 site"/>
</dbReference>
<dbReference type="iPTMnet" id="Q84JU4"/>
<dbReference type="PaxDb" id="3702-AT2G04550.1"/>
<dbReference type="ProteomicsDB" id="248567">
    <molecule id="Q84JU4-1"/>
</dbReference>
<dbReference type="EnsemblPlants" id="AT2G04550.1">
    <molecule id="Q84JU4-1"/>
    <property type="protein sequence ID" value="AT2G04550.1"/>
    <property type="gene ID" value="AT2G04550"/>
</dbReference>
<dbReference type="EnsemblPlants" id="AT2G04550.3">
    <molecule id="Q84JU4-2"/>
    <property type="protein sequence ID" value="AT2G04550.3"/>
    <property type="gene ID" value="AT2G04550"/>
</dbReference>
<dbReference type="GeneID" id="814997"/>
<dbReference type="Gramene" id="AT2G04550.1">
    <molecule id="Q84JU4-1"/>
    <property type="protein sequence ID" value="AT2G04550.1"/>
    <property type="gene ID" value="AT2G04550"/>
</dbReference>
<dbReference type="Gramene" id="AT2G04550.3">
    <molecule id="Q84JU4-2"/>
    <property type="protein sequence ID" value="AT2G04550.3"/>
    <property type="gene ID" value="AT2G04550"/>
</dbReference>
<dbReference type="KEGG" id="ath:AT2G04550"/>
<dbReference type="Araport" id="AT2G04550"/>
<dbReference type="TAIR" id="AT2G04550">
    <property type="gene designation" value="IBR5"/>
</dbReference>
<dbReference type="eggNOG" id="KOG1716">
    <property type="taxonomic scope" value="Eukaryota"/>
</dbReference>
<dbReference type="HOGENOM" id="CLU_053611_0_0_1"/>
<dbReference type="InParanoid" id="Q84JU4"/>
<dbReference type="OMA" id="SFTYHTV"/>
<dbReference type="PhylomeDB" id="Q84JU4"/>
<dbReference type="PRO" id="PR:Q84JU4"/>
<dbReference type="Proteomes" id="UP000006548">
    <property type="component" value="Chromosome 2"/>
</dbReference>
<dbReference type="ExpressionAtlas" id="Q84JU4">
    <property type="expression patterns" value="baseline and differential"/>
</dbReference>
<dbReference type="GO" id="GO:0005634">
    <property type="term" value="C:nucleus"/>
    <property type="evidence" value="ECO:0000314"/>
    <property type="project" value="TAIR"/>
</dbReference>
<dbReference type="GO" id="GO:0033549">
    <property type="term" value="F:MAP kinase phosphatase activity"/>
    <property type="evidence" value="ECO:0000314"/>
    <property type="project" value="TAIR"/>
</dbReference>
<dbReference type="GO" id="GO:0004725">
    <property type="term" value="F:protein tyrosine phosphatase activity"/>
    <property type="evidence" value="ECO:0007669"/>
    <property type="project" value="UniProtKB-EC"/>
</dbReference>
<dbReference type="GO" id="GO:0009738">
    <property type="term" value="P:abscisic acid-activated signaling pathway"/>
    <property type="evidence" value="ECO:0007669"/>
    <property type="project" value="UniProtKB-KW"/>
</dbReference>
<dbReference type="GO" id="GO:0009734">
    <property type="term" value="P:auxin-activated signaling pathway"/>
    <property type="evidence" value="ECO:0007669"/>
    <property type="project" value="UniProtKB-KW"/>
</dbReference>
<dbReference type="GO" id="GO:0035556">
    <property type="term" value="P:intracellular signal transduction"/>
    <property type="evidence" value="ECO:0000305"/>
    <property type="project" value="TAIR"/>
</dbReference>
<dbReference type="GO" id="GO:0043407">
    <property type="term" value="P:negative regulation of MAP kinase activity"/>
    <property type="evidence" value="ECO:0000315"/>
    <property type="project" value="TAIR"/>
</dbReference>
<dbReference type="GO" id="GO:0046620">
    <property type="term" value="P:regulation of organ growth"/>
    <property type="evidence" value="ECO:0000315"/>
    <property type="project" value="TAIR"/>
</dbReference>
<dbReference type="GO" id="GO:0061388">
    <property type="term" value="P:regulation of rate of cell growth"/>
    <property type="evidence" value="ECO:0000315"/>
    <property type="project" value="TAIR"/>
</dbReference>
<dbReference type="GO" id="GO:0009737">
    <property type="term" value="P:response to abscisic acid"/>
    <property type="evidence" value="ECO:0000315"/>
    <property type="project" value="TAIR"/>
</dbReference>
<dbReference type="GO" id="GO:0009733">
    <property type="term" value="P:response to auxin"/>
    <property type="evidence" value="ECO:0000315"/>
    <property type="project" value="TAIR"/>
</dbReference>
<dbReference type="CDD" id="cd18534">
    <property type="entry name" value="DSP_plant_IBR5-like"/>
    <property type="match status" value="1"/>
</dbReference>
<dbReference type="FunFam" id="3.90.190.10:FF:000079">
    <property type="entry name" value="Protein-tyrosine-phosphatase IBR5"/>
    <property type="match status" value="1"/>
</dbReference>
<dbReference type="Gene3D" id="3.90.190.10">
    <property type="entry name" value="Protein tyrosine phosphatase superfamily"/>
    <property type="match status" value="1"/>
</dbReference>
<dbReference type="InterPro" id="IPR000340">
    <property type="entry name" value="Dual-sp_phosphatase_cat-dom"/>
</dbReference>
<dbReference type="InterPro" id="IPR044212">
    <property type="entry name" value="IBR5-like"/>
</dbReference>
<dbReference type="InterPro" id="IPR029021">
    <property type="entry name" value="Prot-tyrosine_phosphatase-like"/>
</dbReference>
<dbReference type="InterPro" id="IPR016130">
    <property type="entry name" value="Tyr_Pase_AS"/>
</dbReference>
<dbReference type="InterPro" id="IPR000387">
    <property type="entry name" value="Tyr_Pase_dom"/>
</dbReference>
<dbReference type="InterPro" id="IPR020422">
    <property type="entry name" value="TYR_PHOSPHATASE_DUAL_dom"/>
</dbReference>
<dbReference type="PANTHER" id="PTHR47244">
    <property type="entry name" value="PROTEIN-TYROSINE-PHOSPHATASE IBR5"/>
    <property type="match status" value="1"/>
</dbReference>
<dbReference type="PANTHER" id="PTHR47244:SF1">
    <property type="entry name" value="PROTEIN-TYROSINE-PHOSPHATASE IBR5"/>
    <property type="match status" value="1"/>
</dbReference>
<dbReference type="Pfam" id="PF00782">
    <property type="entry name" value="DSPc"/>
    <property type="match status" value="1"/>
</dbReference>
<dbReference type="SMART" id="SM00195">
    <property type="entry name" value="DSPc"/>
    <property type="match status" value="1"/>
</dbReference>
<dbReference type="SUPFAM" id="SSF52799">
    <property type="entry name" value="(Phosphotyrosine protein) phosphatases II"/>
    <property type="match status" value="1"/>
</dbReference>
<dbReference type="PROSITE" id="PS00383">
    <property type="entry name" value="TYR_PHOSPHATASE_1"/>
    <property type="match status" value="1"/>
</dbReference>
<dbReference type="PROSITE" id="PS50056">
    <property type="entry name" value="TYR_PHOSPHATASE_2"/>
    <property type="match status" value="1"/>
</dbReference>
<dbReference type="PROSITE" id="PS50054">
    <property type="entry name" value="TYR_PHOSPHATASE_DUAL"/>
    <property type="match status" value="1"/>
</dbReference>
<evidence type="ECO:0000255" key="1">
    <source>
        <dbReference type="PROSITE-ProRule" id="PRU00160"/>
    </source>
</evidence>
<evidence type="ECO:0000255" key="2">
    <source>
        <dbReference type="PROSITE-ProRule" id="PRU10044"/>
    </source>
</evidence>
<evidence type="ECO:0000256" key="3">
    <source>
        <dbReference type="SAM" id="MobiDB-lite"/>
    </source>
</evidence>
<evidence type="ECO:0000269" key="4">
    <source>
    </source>
</evidence>
<evidence type="ECO:0000269" key="5">
    <source>
    </source>
</evidence>
<evidence type="ECO:0000269" key="6">
    <source>
    </source>
</evidence>
<evidence type="ECO:0000269" key="7">
    <source>
    </source>
</evidence>
<evidence type="ECO:0000269" key="8">
    <source>
    </source>
</evidence>
<evidence type="ECO:0000269" key="9">
    <source>
    </source>
</evidence>
<evidence type="ECO:0000305" key="10"/>
<protein>
    <recommendedName>
        <fullName>Protein-tyrosine-phosphatase IBR5</fullName>
        <ecNumber>3.1.3.48</ecNumber>
    </recommendedName>
    <alternativeName>
        <fullName>Protein INDOLE-3-BUTYRIC ACID RESPONSE 5</fullName>
        <shortName>Protein IBA RESPONSE 5</shortName>
    </alternativeName>
    <alternativeName>
        <fullName>SKP1-interacting partner 33</fullName>
    </alternativeName>
</protein>
<proteinExistence type="evidence at protein level"/>
<feature type="chain" id="PRO_0000375243" description="Protein-tyrosine-phosphatase IBR5">
    <location>
        <begin position="1"/>
        <end position="257"/>
    </location>
</feature>
<feature type="domain" description="Tyrosine-protein phosphatase" evidence="1">
    <location>
        <begin position="49"/>
        <end position="185"/>
    </location>
</feature>
<feature type="region of interest" description="Disordered" evidence="3">
    <location>
        <begin position="235"/>
        <end position="257"/>
    </location>
</feature>
<feature type="active site" description="Phosphocysteine intermediate" evidence="1">
    <location>
        <position position="129"/>
    </location>
</feature>
<feature type="splice variant" id="VSP_037361" description="In isoform 2." evidence="10">
    <original>EFYQQLQEFEQGIFGSEMMSAMNINDAPTFGFGFPKIDNQAQAPVFNNAPTSSIFSSPASSIPPQEFTFGATPPKPTTGGDIAMDGS</original>
    <variation>VLPTTAGV</variation>
    <location>
        <begin position="171"/>
        <end position="257"/>
    </location>
</feature>
<reference key="1">
    <citation type="journal article" date="2003" name="Plant Cell">
        <title>IBR5, a dual-specificity phosphatase-like protein modulating auxin and abscisic acid responsiveness in Arabidopsis.</title>
        <authorList>
            <person name="Monroe-Augustus M."/>
            <person name="Zolman B.K."/>
            <person name="Bartel B."/>
        </authorList>
    </citation>
    <scope>NUCLEOTIDE SEQUENCE [MRNA] (ISOFORM 1)</scope>
    <scope>FUNCTION</scope>
    <scope>DISRUPTION PHENOTYPE</scope>
    <scope>TISSUE SPECIFICITY</scope>
    <scope>DEVELOPMENTAL STAGE</scope>
    <source>
        <strain>cv. Landsberg erecta</strain>
    </source>
</reference>
<reference key="2">
    <citation type="journal article" date="1999" name="Nature">
        <title>Sequence and analysis of chromosome 2 of the plant Arabidopsis thaliana.</title>
        <authorList>
            <person name="Lin X."/>
            <person name="Kaul S."/>
            <person name="Rounsley S.D."/>
            <person name="Shea T.P."/>
            <person name="Benito M.-I."/>
            <person name="Town C.D."/>
            <person name="Fujii C.Y."/>
            <person name="Mason T.M."/>
            <person name="Bowman C.L."/>
            <person name="Barnstead M.E."/>
            <person name="Feldblyum T.V."/>
            <person name="Buell C.R."/>
            <person name="Ketchum K.A."/>
            <person name="Lee J.J."/>
            <person name="Ronning C.M."/>
            <person name="Koo H.L."/>
            <person name="Moffat K.S."/>
            <person name="Cronin L.A."/>
            <person name="Shen M."/>
            <person name="Pai G."/>
            <person name="Van Aken S."/>
            <person name="Umayam L."/>
            <person name="Tallon L.J."/>
            <person name="Gill J.E."/>
            <person name="Adams M.D."/>
            <person name="Carrera A.J."/>
            <person name="Creasy T.H."/>
            <person name="Goodman H.M."/>
            <person name="Somerville C.R."/>
            <person name="Copenhaver G.P."/>
            <person name="Preuss D."/>
            <person name="Nierman W.C."/>
            <person name="White O."/>
            <person name="Eisen J.A."/>
            <person name="Salzberg S.L."/>
            <person name="Fraser C.M."/>
            <person name="Venter J.C."/>
        </authorList>
    </citation>
    <scope>NUCLEOTIDE SEQUENCE [LARGE SCALE GENOMIC DNA]</scope>
    <source>
        <strain>cv. Columbia</strain>
    </source>
</reference>
<reference key="3">
    <citation type="journal article" date="2017" name="Plant J.">
        <title>Araport11: a complete reannotation of the Arabidopsis thaliana reference genome.</title>
        <authorList>
            <person name="Cheng C.Y."/>
            <person name="Krishnakumar V."/>
            <person name="Chan A.P."/>
            <person name="Thibaud-Nissen F."/>
            <person name="Schobel S."/>
            <person name="Town C.D."/>
        </authorList>
    </citation>
    <scope>GENOME REANNOTATION</scope>
    <source>
        <strain>cv. Columbia</strain>
    </source>
</reference>
<reference key="4">
    <citation type="journal article" date="2003" name="Science">
        <title>Empirical analysis of transcriptional activity in the Arabidopsis genome.</title>
        <authorList>
            <person name="Yamada K."/>
            <person name="Lim J."/>
            <person name="Dale J.M."/>
            <person name="Chen H."/>
            <person name="Shinn P."/>
            <person name="Palm C.J."/>
            <person name="Southwick A.M."/>
            <person name="Wu H.C."/>
            <person name="Kim C.J."/>
            <person name="Nguyen M."/>
            <person name="Pham P.K."/>
            <person name="Cheuk R.F."/>
            <person name="Karlin-Newmann G."/>
            <person name="Liu S.X."/>
            <person name="Lam B."/>
            <person name="Sakano H."/>
            <person name="Wu T."/>
            <person name="Yu G."/>
            <person name="Miranda M."/>
            <person name="Quach H.L."/>
            <person name="Tripp M."/>
            <person name="Chang C.H."/>
            <person name="Lee J.M."/>
            <person name="Toriumi M.J."/>
            <person name="Chan M.M."/>
            <person name="Tang C.C."/>
            <person name="Onodera C.S."/>
            <person name="Deng J.M."/>
            <person name="Akiyama K."/>
            <person name="Ansari Y."/>
            <person name="Arakawa T."/>
            <person name="Banh J."/>
            <person name="Banno F."/>
            <person name="Bowser L."/>
            <person name="Brooks S.Y."/>
            <person name="Carninci P."/>
            <person name="Chao Q."/>
            <person name="Choy N."/>
            <person name="Enju A."/>
            <person name="Goldsmith A.D."/>
            <person name="Gurjal M."/>
            <person name="Hansen N.F."/>
            <person name="Hayashizaki Y."/>
            <person name="Johnson-Hopson C."/>
            <person name="Hsuan V.W."/>
            <person name="Iida K."/>
            <person name="Karnes M."/>
            <person name="Khan S."/>
            <person name="Koesema E."/>
            <person name="Ishida J."/>
            <person name="Jiang P.X."/>
            <person name="Jones T."/>
            <person name="Kawai J."/>
            <person name="Kamiya A."/>
            <person name="Meyers C."/>
            <person name="Nakajima M."/>
            <person name="Narusaka M."/>
            <person name="Seki M."/>
            <person name="Sakurai T."/>
            <person name="Satou M."/>
            <person name="Tamse R."/>
            <person name="Vaysberg M."/>
            <person name="Wallender E.K."/>
            <person name="Wong C."/>
            <person name="Yamamura Y."/>
            <person name="Yuan S."/>
            <person name="Shinozaki K."/>
            <person name="Davis R.W."/>
            <person name="Theologis A."/>
            <person name="Ecker J.R."/>
        </authorList>
    </citation>
    <scope>NUCLEOTIDE SEQUENCE [LARGE SCALE MRNA] (ISOFORM 1)</scope>
    <source>
        <strain>cv. Columbia</strain>
    </source>
</reference>
<reference key="5">
    <citation type="journal article" date="2003" name="Plant J.">
        <title>Protein interaction analysis of SCF ubiquitin E3 ligase subunits from Arabidopsis.</title>
        <authorList>
            <person name="Risseeuw E.P."/>
            <person name="Daskalchuk T.E."/>
            <person name="Banks T.W."/>
            <person name="Liu E."/>
            <person name="Cotelesage J."/>
            <person name="Hellmann H."/>
            <person name="Estelle M."/>
            <person name="Somers D.E."/>
            <person name="Crosby W.L."/>
        </authorList>
    </citation>
    <scope>INTERACTION WITH SKP1A/ASK1</scope>
</reference>
<reference key="6">
    <citation type="journal article" date="2008" name="BMC Plant Biol.">
        <title>The IBR5 phosphatase promotes Arabidopsis auxin responses through a novel mechanism distinct from TIR1-mediated repressor degradation.</title>
        <authorList>
            <person name="Strader L.C."/>
            <person name="Monroe-Augustus M."/>
            <person name="Bartel B."/>
        </authorList>
    </citation>
    <scope>FUNCTION</scope>
    <scope>DISRUPTION PHENOTYPE</scope>
</reference>
<reference key="7">
    <citation type="journal article" date="2008" name="Genetics">
        <title>Arabidopsis iba response5 suppressors separate responses to various hormones.</title>
        <authorList>
            <person name="Strader L.C."/>
            <person name="Monroe-Augustus M."/>
            <person name="Rogers K.C."/>
            <person name="Lin G.L."/>
            <person name="Bartel B."/>
        </authorList>
    </citation>
    <scope>FUNCTION</scope>
</reference>
<reference key="8">
    <citation type="journal article" date="2009" name="Plant J.">
        <title>Arabidopsis mitogen-activated protein kinase MPK12 interacts with the MAPK phosphatase IBR5 and regulates auxin signaling.</title>
        <authorList>
            <person name="Lee J.S."/>
            <person name="Wang S."/>
            <person name="Sritubtim S."/>
            <person name="Chen J.-G."/>
            <person name="Ellis B.E."/>
        </authorList>
    </citation>
    <scope>FUNCTION</scope>
    <scope>SUBCELLULAR LOCATION</scope>
    <scope>INTERACTION WITH MPK12</scope>
</reference>
<reference key="9">
    <citation type="journal article" date="2016" name="PLoS Biol.">
        <title>Natural variation in Arabidopsis Cvi-0 accession reveals an important role of MPK12 in guard cell CO2 signaling.</title>
        <authorList>
            <person name="Jakobson L."/>
            <person name="Vaahtera L."/>
            <person name="Toldsepp K."/>
            <person name="Nuhkat M."/>
            <person name="Wang C."/>
            <person name="Wang Y.S."/>
            <person name="Horak H."/>
            <person name="Valk E."/>
            <person name="Pechter P."/>
            <person name="Sindarovska Y."/>
            <person name="Tang J."/>
            <person name="Xiao C."/>
            <person name="Xu Y."/>
            <person name="Gerst Talas U."/>
            <person name="Garcia-Sosa A.T."/>
            <person name="Kangasjaervi S."/>
            <person name="Maran U."/>
            <person name="Remm M."/>
            <person name="Roelfsema M.R."/>
            <person name="Hu H."/>
            <person name="Kangasjaervi J."/>
            <person name="Loog M."/>
            <person name="Schroeder J.I."/>
            <person name="Kollist H."/>
            <person name="Brosche M."/>
        </authorList>
    </citation>
    <scope>INTERACTION WITH MPK12</scope>
    <source>
        <strain>cv. Columbia</strain>
        <strain>cv. Cvi-0</strain>
    </source>
</reference>
<comment type="function">
    <text evidence="5 6 7 8">Required for the transduction of auxin and abscisic acid (ABA) signaling pathways. Dephosphorylates and inactivates the MAP kinase MPK12.</text>
</comment>
<comment type="catalytic activity">
    <reaction evidence="2">
        <text>O-phospho-L-tyrosyl-[protein] + H2O = L-tyrosyl-[protein] + phosphate</text>
        <dbReference type="Rhea" id="RHEA:10684"/>
        <dbReference type="Rhea" id="RHEA-COMP:10136"/>
        <dbReference type="Rhea" id="RHEA-COMP:20101"/>
        <dbReference type="ChEBI" id="CHEBI:15377"/>
        <dbReference type="ChEBI" id="CHEBI:43474"/>
        <dbReference type="ChEBI" id="CHEBI:46858"/>
        <dbReference type="ChEBI" id="CHEBI:61978"/>
        <dbReference type="EC" id="3.1.3.48"/>
    </reaction>
</comment>
<comment type="subunit">
    <text evidence="4 8 9">Interacts with SKP1A/ASK1 and with MPK12.</text>
</comment>
<comment type="interaction">
    <interactant intactId="EBI-604555">
        <id>Q84JU4</id>
    </interactant>
    <interactant intactId="EBI-604085">
        <id>Q9LNT9</id>
        <label>ASK4</label>
    </interactant>
    <organismsDiffer>false</organismsDiffer>
    <experiments>3</experiments>
</comment>
<comment type="interaction">
    <interactant intactId="EBI-604555">
        <id>Q84JU4</id>
    </interactant>
    <interactant intactId="EBI-637381">
        <id>Q9LTB8</id>
        <label>CBL9</label>
    </interactant>
    <organismsDiffer>false</organismsDiffer>
    <experiments>4</experiments>
</comment>
<comment type="interaction">
    <interactant intactId="EBI-604555">
        <id>Q84JU4</id>
    </interactant>
    <interactant intactId="EBI-25512239">
        <id>Q9ZR37</id>
        <label>DSPTP1</label>
    </interactant>
    <organismsDiffer>false</organismsDiffer>
    <experiments>3</experiments>
</comment>
<comment type="interaction">
    <interactant intactId="EBI-604555">
        <id>Q84JU4</id>
    </interactant>
    <interactant intactId="EBI-15217346">
        <id>Q9LXT3</id>
        <label>MBF1B</label>
    </interactant>
    <organismsDiffer>false</organismsDiffer>
    <experiments>3</experiments>
</comment>
<comment type="interaction">
    <interactant intactId="EBI-604555">
        <id>Q84JU4</id>
    </interactant>
    <interactant intactId="EBI-2128461">
        <id>Q8GYQ5</id>
        <label>MPK12</label>
    </interactant>
    <organismsDiffer>false</organismsDiffer>
    <experiments>8</experiments>
</comment>
<comment type="interaction">
    <interactant intactId="EBI-604555">
        <id>Q84JU4</id>
    </interactant>
    <interactant intactId="EBI-15192297">
        <id>Q9LQF0</id>
        <label>TCP23</label>
    </interactant>
    <organismsDiffer>false</organismsDiffer>
    <experiments>3</experiments>
</comment>
<comment type="interaction">
    <interactant intactId="EBI-604555">
        <id>Q84JU4</id>
    </interactant>
    <interactant intactId="EBI-25512440">
        <id>Q93WV6</id>
        <label>WRKY68</label>
    </interactant>
    <organismsDiffer>false</organismsDiffer>
    <experiments>3</experiments>
</comment>
<comment type="subcellular location">
    <subcellularLocation>
        <location evidence="8">Nucleus</location>
    </subcellularLocation>
</comment>
<comment type="alternative products">
    <event type="alternative splicing"/>
    <isoform>
        <id>Q84JU4-1</id>
        <name>1</name>
        <sequence type="displayed"/>
    </isoform>
    <isoform>
        <id>Q84JU4-2</id>
        <name>2</name>
        <sequence type="described" ref="VSP_037361"/>
    </isoform>
</comment>
<comment type="tissue specificity">
    <text evidence="5">Expressed in root tips and vasculature, cotyledons, stems, leaves vasculature and hydathodes, flowers, siliques, and seeds.</text>
</comment>
<comment type="developmental stage">
    <text evidence="5">During flower development, detected in sepals, anther filaments, and carpels. During germination, levels decline slightly two days after imbibition.</text>
</comment>
<comment type="disruption phenotype">
    <text evidence="5 6">Impaired responses to phytohormones such as indole-3-butyric acid, indole-3-acetic acid (auxin), synthetic auxins, auxin transport inhibitors, and abscisic acid (ABA). Plants exhibit long roots and short hypocotyls when grown in the light, with aberrant vascular patterning, increased leaf serration, and reduced accumulation of auxin-inducible genes.</text>
</comment>
<comment type="similarity">
    <text evidence="10">Belongs to the protein-tyrosine phosphatase family.</text>
</comment>
<comment type="sequence caution" evidence="10">
    <conflict type="erroneous gene model prediction">
        <sequence resource="EMBL-CDS" id="AAD25825"/>
    </conflict>
</comment>